<gene>
    <name evidence="1" type="primary">odhA</name>
    <name type="ordered locus">BCAH187_A1418</name>
</gene>
<comment type="function">
    <text evidence="1">E1 component of the 2-oxoglutarate dehydrogenase (OGDH) complex which catalyzes the decarboxylation of 2-oxoglutarate, the first step in the conversion of 2-oxoglutarate to succinyl-CoA and CO(2).</text>
</comment>
<comment type="catalytic activity">
    <reaction evidence="1">
        <text>N(6)-[(R)-lipoyl]-L-lysyl-[protein] + 2-oxoglutarate + H(+) = N(6)-[(R)-S(8)-succinyldihydrolipoyl]-L-lysyl-[protein] + CO2</text>
        <dbReference type="Rhea" id="RHEA:12188"/>
        <dbReference type="Rhea" id="RHEA-COMP:10474"/>
        <dbReference type="Rhea" id="RHEA-COMP:20092"/>
        <dbReference type="ChEBI" id="CHEBI:15378"/>
        <dbReference type="ChEBI" id="CHEBI:16526"/>
        <dbReference type="ChEBI" id="CHEBI:16810"/>
        <dbReference type="ChEBI" id="CHEBI:83099"/>
        <dbReference type="ChEBI" id="CHEBI:83120"/>
        <dbReference type="EC" id="1.2.4.2"/>
    </reaction>
</comment>
<comment type="cofactor">
    <cofactor evidence="1">
        <name>thiamine diphosphate</name>
        <dbReference type="ChEBI" id="CHEBI:58937"/>
    </cofactor>
</comment>
<comment type="subunit">
    <text evidence="1">Homodimer. Part of the 2-oxoglutarate dehydrogenase (OGDH) complex composed of E1 (2-oxoglutarate dehydrogenase), E2 (dihydrolipoamide succinyltransferase) and E3 (dihydrolipoamide dehydrogenase); the complex contains multiple copies of the three enzymatic components (E1, E2 and E3).</text>
</comment>
<comment type="similarity">
    <text evidence="1">Belongs to the alpha-ketoglutarate dehydrogenase family.</text>
</comment>
<organism>
    <name type="scientific">Bacillus cereus (strain AH187)</name>
    <dbReference type="NCBI Taxonomy" id="405534"/>
    <lineage>
        <taxon>Bacteria</taxon>
        <taxon>Bacillati</taxon>
        <taxon>Bacillota</taxon>
        <taxon>Bacilli</taxon>
        <taxon>Bacillales</taxon>
        <taxon>Bacillaceae</taxon>
        <taxon>Bacillus</taxon>
        <taxon>Bacillus cereus group</taxon>
    </lineage>
</organism>
<keyword id="KW-0324">Glycolysis</keyword>
<keyword id="KW-0560">Oxidoreductase</keyword>
<keyword id="KW-0786">Thiamine pyrophosphate</keyword>
<proteinExistence type="inferred from homology"/>
<protein>
    <recommendedName>
        <fullName evidence="1">2-oxoglutarate dehydrogenase E1 component</fullName>
        <ecNumber evidence="1">1.2.4.2</ecNumber>
    </recommendedName>
    <alternativeName>
        <fullName evidence="1">Alpha-ketoglutarate dehydrogenase</fullName>
    </alternativeName>
</protein>
<dbReference type="EC" id="1.2.4.2" evidence="1"/>
<dbReference type="EMBL" id="CP001177">
    <property type="protein sequence ID" value="ACJ78150.1"/>
    <property type="molecule type" value="Genomic_DNA"/>
</dbReference>
<dbReference type="SMR" id="B7I0H2"/>
<dbReference type="KEGG" id="bcr:BCAH187_A1418"/>
<dbReference type="HOGENOM" id="CLU_004709_1_0_9"/>
<dbReference type="Proteomes" id="UP000002214">
    <property type="component" value="Chromosome"/>
</dbReference>
<dbReference type="GO" id="GO:0005829">
    <property type="term" value="C:cytosol"/>
    <property type="evidence" value="ECO:0007669"/>
    <property type="project" value="TreeGrafter"/>
</dbReference>
<dbReference type="GO" id="GO:0045252">
    <property type="term" value="C:oxoglutarate dehydrogenase complex"/>
    <property type="evidence" value="ECO:0007669"/>
    <property type="project" value="TreeGrafter"/>
</dbReference>
<dbReference type="GO" id="GO:0004591">
    <property type="term" value="F:oxoglutarate dehydrogenase (succinyl-transferring) activity"/>
    <property type="evidence" value="ECO:0007669"/>
    <property type="project" value="UniProtKB-UniRule"/>
</dbReference>
<dbReference type="GO" id="GO:0030976">
    <property type="term" value="F:thiamine pyrophosphate binding"/>
    <property type="evidence" value="ECO:0007669"/>
    <property type="project" value="UniProtKB-UniRule"/>
</dbReference>
<dbReference type="GO" id="GO:0006096">
    <property type="term" value="P:glycolytic process"/>
    <property type="evidence" value="ECO:0007669"/>
    <property type="project" value="UniProtKB-UniRule"/>
</dbReference>
<dbReference type="GO" id="GO:0006099">
    <property type="term" value="P:tricarboxylic acid cycle"/>
    <property type="evidence" value="ECO:0007669"/>
    <property type="project" value="TreeGrafter"/>
</dbReference>
<dbReference type="CDD" id="cd02016">
    <property type="entry name" value="TPP_E1_OGDC_like"/>
    <property type="match status" value="1"/>
</dbReference>
<dbReference type="FunFam" id="3.40.50.11610:FF:000002">
    <property type="entry name" value="2-oxoglutarate dehydrogenase E1 component"/>
    <property type="match status" value="1"/>
</dbReference>
<dbReference type="FunFam" id="3.40.50.970:FF:000036">
    <property type="entry name" value="2-oxoglutarate dehydrogenase E1 component"/>
    <property type="match status" value="1"/>
</dbReference>
<dbReference type="Gene3D" id="3.40.50.12470">
    <property type="match status" value="1"/>
</dbReference>
<dbReference type="Gene3D" id="3.40.50.970">
    <property type="match status" value="1"/>
</dbReference>
<dbReference type="Gene3D" id="3.40.50.11610">
    <property type="entry name" value="Multifunctional 2-oxoglutarate metabolism enzyme, C-terminal domain"/>
    <property type="match status" value="1"/>
</dbReference>
<dbReference type="HAMAP" id="MF_01169">
    <property type="entry name" value="SucA_OdhA"/>
    <property type="match status" value="1"/>
</dbReference>
<dbReference type="InterPro" id="IPR011603">
    <property type="entry name" value="2oxoglutarate_DH_E1"/>
</dbReference>
<dbReference type="InterPro" id="IPR023784">
    <property type="entry name" value="2oxoglutarate_DH_E1_bac"/>
</dbReference>
<dbReference type="InterPro" id="IPR001017">
    <property type="entry name" value="DH_E1"/>
</dbReference>
<dbReference type="InterPro" id="IPR042179">
    <property type="entry name" value="KGD_C_sf"/>
</dbReference>
<dbReference type="InterPro" id="IPR031717">
    <property type="entry name" value="ODO-1/KGD_C"/>
</dbReference>
<dbReference type="InterPro" id="IPR029061">
    <property type="entry name" value="THDP-binding"/>
</dbReference>
<dbReference type="InterPro" id="IPR005475">
    <property type="entry name" value="Transketolase-like_Pyr-bd"/>
</dbReference>
<dbReference type="NCBIfam" id="TIGR00239">
    <property type="entry name" value="2oxo_dh_E1"/>
    <property type="match status" value="1"/>
</dbReference>
<dbReference type="NCBIfam" id="NF006914">
    <property type="entry name" value="PRK09404.1"/>
    <property type="match status" value="1"/>
</dbReference>
<dbReference type="NCBIfam" id="NF008907">
    <property type="entry name" value="PRK12270.1"/>
    <property type="match status" value="1"/>
</dbReference>
<dbReference type="PANTHER" id="PTHR23152:SF4">
    <property type="entry name" value="2-OXOADIPATE DEHYDROGENASE COMPLEX COMPONENT E1"/>
    <property type="match status" value="1"/>
</dbReference>
<dbReference type="PANTHER" id="PTHR23152">
    <property type="entry name" value="2-OXOGLUTARATE DEHYDROGENASE"/>
    <property type="match status" value="1"/>
</dbReference>
<dbReference type="Pfam" id="PF00676">
    <property type="entry name" value="E1_dh"/>
    <property type="match status" value="1"/>
</dbReference>
<dbReference type="Pfam" id="PF16870">
    <property type="entry name" value="OxoGdeHyase_C"/>
    <property type="match status" value="1"/>
</dbReference>
<dbReference type="Pfam" id="PF02779">
    <property type="entry name" value="Transket_pyr"/>
    <property type="match status" value="1"/>
</dbReference>
<dbReference type="PIRSF" id="PIRSF000157">
    <property type="entry name" value="Oxoglu_dh_E1"/>
    <property type="match status" value="1"/>
</dbReference>
<dbReference type="SMART" id="SM00861">
    <property type="entry name" value="Transket_pyr"/>
    <property type="match status" value="1"/>
</dbReference>
<dbReference type="SUPFAM" id="SSF52518">
    <property type="entry name" value="Thiamin diphosphate-binding fold (THDP-binding)"/>
    <property type="match status" value="2"/>
</dbReference>
<feature type="chain" id="PRO_1000137969" description="2-oxoglutarate dehydrogenase E1 component">
    <location>
        <begin position="1"/>
        <end position="955"/>
    </location>
</feature>
<name>ODO1_BACC7</name>
<evidence type="ECO:0000255" key="1">
    <source>
        <dbReference type="HAMAP-Rule" id="MF_01169"/>
    </source>
</evidence>
<sequence length="955" mass="106498">MTRKNTTTNPWAKFHGPNLGYVIEQYDLYVTGAGSVDPELQELFEIFGAPSFQDDVVTGDNTATHFSPQNTGNIEKILKVVQLVEQIRSFGHTLAHINPMEDAANGQSLLEKAMNELSDADLKAIPAKTVWQDAPEGIHTALDVIHRLKEVYTQTLAYEFSHIQDSEERAWLHQMVESNSLRQPLSNQKRTALLKRLTAVEGFEQFLHKTFVGQKRFSIEGVDMLVPVLDEIVLEGAKNGVEDVMIGMAHRGRLSVLAHVLEKPYSHMFAEFKHAKIEGAVANSGWTGDVKYHLGREQVVSNEEVSTRVTLANNPSHLEFVNPVVEGFARAAQENRKKSGLPEQDTSKSFVILVHGDAAFPGQGIVSETLNLSRLNAYQTGGTIHVIANNAVGFTTDSYDSRSTKYSSDLAKGFDIPIVHVNADDPEACLAAANLAIQYRMLFKKDFLIDLIGYRRYGHNEMDDPAVTQPQVYKKIKNHPTVRAIYADQLQAAGVLNADEIETITQFTQEQLKSDYAQVPPADTSDATIHVKVPDVVAKGIQSIDTGVELDSLRAINEGLLSWPEGFNVYPKVKKILERRKDALEENGKIEWALAESLAFASILQEGTPIRLTGQDSQRGTFAHRHIVLHDTDTNETYSPLHRLPNINASFSVHNSPLSEAAVVGYEYGYNVFAPETLVMWEAQYGDFSNTAQALFDQYVSAGRAKWGQKSGLVLLLPHGYEGQGPEHSSARPERFLQLAAENNWTVANLTSAAQYFHILRRQASILGTEAVRPLVLMTPKSLLRHPLTLSTASQLSEGRFQPALEQENLGMKPNKVKRLVLSTGKMAIDLAAEIESGKHEYNLDEIHIVRIEQLYPFPAEKVQSIIKRFKNLEEIIWVQEEPRNMGAWHYMAPILFELAGDKVKTGYIGRPDRSSPSGGDPFAHKAEQELIVSHALDVKYNFRQDKLEIEVFSN</sequence>
<reference key="1">
    <citation type="submission" date="2008-10" db="EMBL/GenBank/DDBJ databases">
        <title>Genome sequence of Bacillus cereus AH187.</title>
        <authorList>
            <person name="Dodson R.J."/>
            <person name="Durkin A.S."/>
            <person name="Rosovitz M.J."/>
            <person name="Rasko D.A."/>
            <person name="Kolsto A.B."/>
            <person name="Okstad O.A."/>
            <person name="Ravel J."/>
            <person name="Sutton G."/>
        </authorList>
    </citation>
    <scope>NUCLEOTIDE SEQUENCE [LARGE SCALE GENOMIC DNA]</scope>
    <source>
        <strain>AH187</strain>
    </source>
</reference>
<accession>B7I0H2</accession>